<reference key="1">
    <citation type="submission" date="1999-08" db="EMBL/GenBank/DDBJ databases">
        <authorList>
            <person name="Lee H.J."/>
            <person name="Kang H.S."/>
        </authorList>
    </citation>
    <scope>NUCLEOTIDE SEQUENCE [GENOMIC DNA]</scope>
    <source>
        <strain>ATCC 31821 / ZM4 / CP4</strain>
    </source>
</reference>
<reference key="2">
    <citation type="journal article" date="2005" name="Nat. Biotechnol.">
        <title>The genome sequence of the ethanologenic bacterium Zymomonas mobilis ZM4.</title>
        <authorList>
            <person name="Seo J.-S."/>
            <person name="Chong H."/>
            <person name="Park H.S."/>
            <person name="Yoon K.-O."/>
            <person name="Jung C."/>
            <person name="Kim J.J."/>
            <person name="Hong J.H."/>
            <person name="Kim H."/>
            <person name="Kim J.-H."/>
            <person name="Kil J.-I."/>
            <person name="Park C.J."/>
            <person name="Oh H.-M."/>
            <person name="Lee J.-S."/>
            <person name="Jin S.-J."/>
            <person name="Um H.-W."/>
            <person name="Lee H.-J."/>
            <person name="Oh S.-J."/>
            <person name="Kim J.Y."/>
            <person name="Kang H.L."/>
            <person name="Lee S.Y."/>
            <person name="Lee K.J."/>
            <person name="Kang H.S."/>
        </authorList>
    </citation>
    <scope>NUCLEOTIDE SEQUENCE [LARGE SCALE GENOMIC DNA]</scope>
    <source>
        <strain>ATCC 31821 / ZM4 / CP4</strain>
    </source>
</reference>
<accession>Q9RNL5</accession>
<accession>Q5NM10</accession>
<dbReference type="EMBL" id="AF180145">
    <property type="protein sequence ID" value="AAD56912.1"/>
    <property type="molecule type" value="Genomic_DNA"/>
</dbReference>
<dbReference type="EMBL" id="AE008692">
    <property type="protein sequence ID" value="AAV90250.1"/>
    <property type="molecule type" value="Genomic_DNA"/>
</dbReference>
<dbReference type="RefSeq" id="WP_011241376.1">
    <property type="nucleotide sequence ID" value="NZ_CP035711.1"/>
</dbReference>
<dbReference type="SMR" id="Q9RNL5"/>
<dbReference type="STRING" id="264203.ZMO1626"/>
<dbReference type="KEGG" id="zmo:ZMO1626"/>
<dbReference type="eggNOG" id="COG0706">
    <property type="taxonomic scope" value="Bacteria"/>
</dbReference>
<dbReference type="HOGENOM" id="CLU_016535_1_0_5"/>
<dbReference type="Proteomes" id="UP000001173">
    <property type="component" value="Chromosome"/>
</dbReference>
<dbReference type="GO" id="GO:0005886">
    <property type="term" value="C:plasma membrane"/>
    <property type="evidence" value="ECO:0007669"/>
    <property type="project" value="UniProtKB-SubCell"/>
</dbReference>
<dbReference type="GO" id="GO:0032977">
    <property type="term" value="F:membrane insertase activity"/>
    <property type="evidence" value="ECO:0007669"/>
    <property type="project" value="InterPro"/>
</dbReference>
<dbReference type="GO" id="GO:0051205">
    <property type="term" value="P:protein insertion into membrane"/>
    <property type="evidence" value="ECO:0007669"/>
    <property type="project" value="TreeGrafter"/>
</dbReference>
<dbReference type="GO" id="GO:0015031">
    <property type="term" value="P:protein transport"/>
    <property type="evidence" value="ECO:0007669"/>
    <property type="project" value="UniProtKB-KW"/>
</dbReference>
<dbReference type="CDD" id="cd20070">
    <property type="entry name" value="5TM_YidC_Alb3"/>
    <property type="match status" value="1"/>
</dbReference>
<dbReference type="CDD" id="cd19961">
    <property type="entry name" value="EcYidC-like_peri"/>
    <property type="match status" value="1"/>
</dbReference>
<dbReference type="Gene3D" id="2.70.98.90">
    <property type="match status" value="1"/>
</dbReference>
<dbReference type="HAMAP" id="MF_01810">
    <property type="entry name" value="YidC_type1"/>
    <property type="match status" value="1"/>
</dbReference>
<dbReference type="InterPro" id="IPR019998">
    <property type="entry name" value="Membr_insert_YidC"/>
</dbReference>
<dbReference type="InterPro" id="IPR028053">
    <property type="entry name" value="Membr_insert_YidC_N"/>
</dbReference>
<dbReference type="InterPro" id="IPR001708">
    <property type="entry name" value="YidC/ALB3/OXA1/COX18"/>
</dbReference>
<dbReference type="InterPro" id="IPR028055">
    <property type="entry name" value="YidC/Oxa/ALB_C"/>
</dbReference>
<dbReference type="InterPro" id="IPR047196">
    <property type="entry name" value="YidC_ALB_C"/>
</dbReference>
<dbReference type="InterPro" id="IPR038221">
    <property type="entry name" value="YidC_periplasmic_sf"/>
</dbReference>
<dbReference type="NCBIfam" id="NF002353">
    <property type="entry name" value="PRK01318.1-4"/>
    <property type="match status" value="1"/>
</dbReference>
<dbReference type="NCBIfam" id="TIGR03593">
    <property type="entry name" value="yidC_nterm"/>
    <property type="match status" value="1"/>
</dbReference>
<dbReference type="NCBIfam" id="TIGR03592">
    <property type="entry name" value="yidC_oxa1_cterm"/>
    <property type="match status" value="1"/>
</dbReference>
<dbReference type="PANTHER" id="PTHR12428:SF65">
    <property type="entry name" value="CYTOCHROME C OXIDASE ASSEMBLY PROTEIN COX18, MITOCHONDRIAL"/>
    <property type="match status" value="1"/>
</dbReference>
<dbReference type="PANTHER" id="PTHR12428">
    <property type="entry name" value="OXA1"/>
    <property type="match status" value="1"/>
</dbReference>
<dbReference type="Pfam" id="PF02096">
    <property type="entry name" value="60KD_IMP"/>
    <property type="match status" value="1"/>
</dbReference>
<dbReference type="Pfam" id="PF14849">
    <property type="entry name" value="YidC_periplas"/>
    <property type="match status" value="1"/>
</dbReference>
<dbReference type="PRINTS" id="PR00701">
    <property type="entry name" value="60KDINNERMP"/>
</dbReference>
<dbReference type="PRINTS" id="PR01900">
    <property type="entry name" value="YIDCPROTEIN"/>
</dbReference>
<proteinExistence type="inferred from homology"/>
<gene>
    <name evidence="1" type="primary">yidC</name>
    <name type="ordered locus">ZMO1626</name>
</gene>
<evidence type="ECO:0000255" key="1">
    <source>
        <dbReference type="HAMAP-Rule" id="MF_01810"/>
    </source>
</evidence>
<evidence type="ECO:0000256" key="2">
    <source>
        <dbReference type="SAM" id="MobiDB-lite"/>
    </source>
</evidence>
<evidence type="ECO:0000305" key="3"/>
<feature type="chain" id="PRO_0000124776" description="Membrane protein insertase YidC">
    <location>
        <begin position="1"/>
        <end position="579"/>
    </location>
</feature>
<feature type="transmembrane region" description="Helical" evidence="1">
    <location>
        <begin position="10"/>
        <end position="30"/>
    </location>
</feature>
<feature type="transmembrane region" description="Helical" evidence="1">
    <location>
        <begin position="330"/>
        <end position="350"/>
    </location>
</feature>
<feature type="transmembrane region" description="Helical" evidence="1">
    <location>
        <begin position="351"/>
        <end position="371"/>
    </location>
</feature>
<feature type="transmembrane region" description="Helical" evidence="1">
    <location>
        <begin position="423"/>
        <end position="443"/>
    </location>
</feature>
<feature type="transmembrane region" description="Helical" evidence="1">
    <location>
        <begin position="478"/>
        <end position="498"/>
    </location>
</feature>
<feature type="transmembrane region" description="Helical" evidence="1">
    <location>
        <begin position="523"/>
        <end position="543"/>
    </location>
</feature>
<feature type="region of interest" description="Disordered" evidence="2">
    <location>
        <begin position="35"/>
        <end position="61"/>
    </location>
</feature>
<feature type="region of interest" description="Disordered" evidence="2">
    <location>
        <begin position="560"/>
        <end position="579"/>
    </location>
</feature>
<feature type="compositionally biased region" description="Basic and acidic residues" evidence="2">
    <location>
        <begin position="560"/>
        <end position="572"/>
    </location>
</feature>
<feature type="sequence conflict" description="In Ref. 1; AAD56912." evidence="3" ref="1">
    <original>F</original>
    <variation>L</variation>
    <location>
        <position position="167"/>
    </location>
</feature>
<feature type="sequence conflict" description="In Ref. 1; AAD56912." evidence="3" ref="1">
    <original>S</original>
    <variation>C</variation>
    <location>
        <position position="172"/>
    </location>
</feature>
<protein>
    <recommendedName>
        <fullName evidence="1">Membrane protein insertase YidC</fullName>
    </recommendedName>
    <alternativeName>
        <fullName evidence="1">Foldase YidC</fullName>
    </alternativeName>
    <alternativeName>
        <fullName evidence="1">Membrane integrase YidC</fullName>
    </alternativeName>
    <alternativeName>
        <fullName evidence="1">Membrane protein YidC</fullName>
    </alternativeName>
</protein>
<comment type="function">
    <text evidence="1">Required for the insertion and/or proper folding and/or complex formation of integral membrane proteins into the membrane. Involved in integration of membrane proteins that insert both dependently and independently of the Sec translocase complex, as well as at least some lipoproteins. Aids folding of multispanning membrane proteins.</text>
</comment>
<comment type="subunit">
    <text evidence="1">Interacts with the Sec translocase complex via SecD. Specifically interacts with transmembrane segments of nascent integral membrane proteins during membrane integration.</text>
</comment>
<comment type="subcellular location">
    <subcellularLocation>
        <location evidence="1">Cell inner membrane</location>
        <topology evidence="1">Multi-pass membrane protein</topology>
    </subcellularLocation>
</comment>
<comment type="similarity">
    <text evidence="1">Belongs to the OXA1/ALB3/YidC family. Type 1 subfamily.</text>
</comment>
<organism>
    <name type="scientific">Zymomonas mobilis subsp. mobilis (strain ATCC 31821 / ZM4 / CP4)</name>
    <dbReference type="NCBI Taxonomy" id="264203"/>
    <lineage>
        <taxon>Bacteria</taxon>
        <taxon>Pseudomonadati</taxon>
        <taxon>Pseudomonadota</taxon>
        <taxon>Alphaproteobacteria</taxon>
        <taxon>Sphingomonadales</taxon>
        <taxon>Zymomonadaceae</taxon>
        <taxon>Zymomonas</taxon>
    </lineage>
</organism>
<keyword id="KW-0997">Cell inner membrane</keyword>
<keyword id="KW-1003">Cell membrane</keyword>
<keyword id="KW-0143">Chaperone</keyword>
<keyword id="KW-0472">Membrane</keyword>
<keyword id="KW-0653">Protein transport</keyword>
<keyword id="KW-1185">Reference proteome</keyword>
<keyword id="KW-0812">Transmembrane</keyword>
<keyword id="KW-1133">Transmembrane helix</keyword>
<keyword id="KW-0813">Transport</keyword>
<name>YIDC_ZYMMO</name>
<sequence length="579" mass="65988">MDDKHQQRNLVIVTILSALILFGWSFVTKHWLSTPPAPTQQGKNQPKAELTAEESGDKPLKPVDQVLQETPRLPILTESVEGSVNLKGLRLDDLTLIRHRETLAKNSPAVRLFSPAGTENAWFTSFGWTGENVALPNADSLWKADSDKLTADHPVNFYWNNQQGQIFRITLSVDHDYMFNATESVINRGNSPVIVQPYVLTNHQGVFKTASSWTLHTGPIGVFNGSVNYHVDFADIDKATNNSIRNNTQGGWIGFSDKYWLTALAPHNQKIAIDTDFRSSSNHHYQADFTVAPVVVAAGKTASTSVDVFAGAKEVRVLDRYRDQLHLPHFDKAIDWGWFAIIEKVFFYYLDWLFLHVGNYGLAIILMVFTIRALIFPIANKQYASMASMRRLQPKMQAVRERYKNDEARMRQELVTLYQKEKVNPFAGCLPMFIQFPIFIALYKTLLVTIESRHQPFILWIKDLSAPDPLTPFNLFGLLHFTPPHFLMIGVLPIILGITMWLQFRASPQQLEPAQQQIMSFLPLISVIFMAPLAAGLQVYYIFNNLISLAQMMWLQHRHSTPEERQDRAERKRPSKKKA</sequence>